<name>UNG_STAAW</name>
<comment type="function">
    <text evidence="1">Excises uracil residues from the DNA which can arise as a result of misincorporation of dUMP residues by DNA polymerase or due to deamination of cytosine.</text>
</comment>
<comment type="catalytic activity">
    <reaction evidence="1">
        <text>Hydrolyzes single-stranded DNA or mismatched double-stranded DNA and polynucleotides, releasing free uracil.</text>
        <dbReference type="EC" id="3.2.2.27"/>
    </reaction>
</comment>
<comment type="subcellular location">
    <subcellularLocation>
        <location evidence="1">Cytoplasm</location>
    </subcellularLocation>
</comment>
<comment type="similarity">
    <text evidence="1">Belongs to the uracil-DNA glycosylase (UDG) superfamily. UNG family.</text>
</comment>
<organism>
    <name type="scientific">Staphylococcus aureus (strain MW2)</name>
    <dbReference type="NCBI Taxonomy" id="196620"/>
    <lineage>
        <taxon>Bacteria</taxon>
        <taxon>Bacillati</taxon>
        <taxon>Bacillota</taxon>
        <taxon>Bacilli</taxon>
        <taxon>Bacillales</taxon>
        <taxon>Staphylococcaceae</taxon>
        <taxon>Staphylococcus</taxon>
    </lineage>
</organism>
<gene>
    <name evidence="1" type="primary">ung</name>
    <name type="ordered locus">MW0536</name>
</gene>
<reference key="1">
    <citation type="journal article" date="2002" name="Lancet">
        <title>Genome and virulence determinants of high virulence community-acquired MRSA.</title>
        <authorList>
            <person name="Baba T."/>
            <person name="Takeuchi F."/>
            <person name="Kuroda M."/>
            <person name="Yuzawa H."/>
            <person name="Aoki K."/>
            <person name="Oguchi A."/>
            <person name="Nagai Y."/>
            <person name="Iwama N."/>
            <person name="Asano K."/>
            <person name="Naimi T."/>
            <person name="Kuroda H."/>
            <person name="Cui L."/>
            <person name="Yamamoto K."/>
            <person name="Hiramatsu K."/>
        </authorList>
    </citation>
    <scope>NUCLEOTIDE SEQUENCE [LARGE SCALE GENOMIC DNA]</scope>
    <source>
        <strain>MW2</strain>
    </source>
</reference>
<feature type="chain" id="PRO_0000176141" description="Uracil-DNA glycosylase">
    <location>
        <begin position="1"/>
        <end position="218"/>
    </location>
</feature>
<feature type="active site" description="Proton acceptor" evidence="1">
    <location>
        <position position="59"/>
    </location>
</feature>
<dbReference type="EC" id="3.2.2.27" evidence="1"/>
<dbReference type="EMBL" id="BA000033">
    <property type="protein sequence ID" value="BAB94401.1"/>
    <property type="molecule type" value="Genomic_DNA"/>
</dbReference>
<dbReference type="RefSeq" id="WP_000455256.1">
    <property type="nucleotide sequence ID" value="NC_003923.1"/>
</dbReference>
<dbReference type="SMR" id="P67077"/>
<dbReference type="KEGG" id="sam:MW0536"/>
<dbReference type="HOGENOM" id="CLU_032162_3_1_9"/>
<dbReference type="GO" id="GO:0005737">
    <property type="term" value="C:cytoplasm"/>
    <property type="evidence" value="ECO:0007669"/>
    <property type="project" value="UniProtKB-SubCell"/>
</dbReference>
<dbReference type="GO" id="GO:0004844">
    <property type="term" value="F:uracil DNA N-glycosylase activity"/>
    <property type="evidence" value="ECO:0007669"/>
    <property type="project" value="UniProtKB-UniRule"/>
</dbReference>
<dbReference type="GO" id="GO:0097510">
    <property type="term" value="P:base-excision repair, AP site formation via deaminated base removal"/>
    <property type="evidence" value="ECO:0007669"/>
    <property type="project" value="TreeGrafter"/>
</dbReference>
<dbReference type="CDD" id="cd10027">
    <property type="entry name" value="UDG-F1-like"/>
    <property type="match status" value="1"/>
</dbReference>
<dbReference type="FunFam" id="3.40.470.10:FF:000001">
    <property type="entry name" value="Uracil-DNA glycosylase"/>
    <property type="match status" value="1"/>
</dbReference>
<dbReference type="Gene3D" id="3.40.470.10">
    <property type="entry name" value="Uracil-DNA glycosylase-like domain"/>
    <property type="match status" value="1"/>
</dbReference>
<dbReference type="HAMAP" id="MF_00148">
    <property type="entry name" value="UDG"/>
    <property type="match status" value="1"/>
</dbReference>
<dbReference type="InterPro" id="IPR002043">
    <property type="entry name" value="UDG_fam1"/>
</dbReference>
<dbReference type="InterPro" id="IPR018085">
    <property type="entry name" value="Ura-DNA_Glyclase_AS"/>
</dbReference>
<dbReference type="InterPro" id="IPR005122">
    <property type="entry name" value="Uracil-DNA_glycosylase-like"/>
</dbReference>
<dbReference type="InterPro" id="IPR036895">
    <property type="entry name" value="Uracil-DNA_glycosylase-like_sf"/>
</dbReference>
<dbReference type="NCBIfam" id="NF003588">
    <property type="entry name" value="PRK05254.1-1"/>
    <property type="match status" value="1"/>
</dbReference>
<dbReference type="NCBIfam" id="NF003589">
    <property type="entry name" value="PRK05254.1-2"/>
    <property type="match status" value="1"/>
</dbReference>
<dbReference type="NCBIfam" id="NF003591">
    <property type="entry name" value="PRK05254.1-4"/>
    <property type="match status" value="1"/>
</dbReference>
<dbReference type="NCBIfam" id="NF003592">
    <property type="entry name" value="PRK05254.1-5"/>
    <property type="match status" value="1"/>
</dbReference>
<dbReference type="NCBIfam" id="TIGR00628">
    <property type="entry name" value="ung"/>
    <property type="match status" value="1"/>
</dbReference>
<dbReference type="PANTHER" id="PTHR11264">
    <property type="entry name" value="URACIL-DNA GLYCOSYLASE"/>
    <property type="match status" value="1"/>
</dbReference>
<dbReference type="PANTHER" id="PTHR11264:SF0">
    <property type="entry name" value="URACIL-DNA GLYCOSYLASE"/>
    <property type="match status" value="1"/>
</dbReference>
<dbReference type="Pfam" id="PF03167">
    <property type="entry name" value="UDG"/>
    <property type="match status" value="1"/>
</dbReference>
<dbReference type="SMART" id="SM00986">
    <property type="entry name" value="UDG"/>
    <property type="match status" value="1"/>
</dbReference>
<dbReference type="SMART" id="SM00987">
    <property type="entry name" value="UreE_C"/>
    <property type="match status" value="1"/>
</dbReference>
<dbReference type="SUPFAM" id="SSF52141">
    <property type="entry name" value="Uracil-DNA glycosylase-like"/>
    <property type="match status" value="1"/>
</dbReference>
<dbReference type="PROSITE" id="PS00130">
    <property type="entry name" value="U_DNA_GLYCOSYLASE"/>
    <property type="match status" value="1"/>
</dbReference>
<proteinExistence type="inferred from homology"/>
<evidence type="ECO:0000255" key="1">
    <source>
        <dbReference type="HAMAP-Rule" id="MF_00148"/>
    </source>
</evidence>
<protein>
    <recommendedName>
        <fullName evidence="1">Uracil-DNA glycosylase</fullName>
        <shortName evidence="1">UDG</shortName>
        <ecNumber evidence="1">3.2.2.27</ecNumber>
    </recommendedName>
</protein>
<accession>P67077</accession>
<accession>Q99W30</accession>
<keyword id="KW-0963">Cytoplasm</keyword>
<keyword id="KW-0227">DNA damage</keyword>
<keyword id="KW-0234">DNA repair</keyword>
<keyword id="KW-0378">Hydrolase</keyword>
<sequence length="218" mass="24937">MEWSQIFHDITTKHDFKAMHDFLEKEYSTAIVYPDRENIYQAFDLTPFENIKVVILGQDPYHGPNQAHGLAFSVQPNAKFPPSLRNMYKELADDIGCVRQTPHLQDWAREGVLLLNTVLTVRQGEANSHRDIGWETFTDEIIKAVSDYKEHVVFILWGKPAQQKIKLIDTSKHCIIKSVHPSPLSAYRGFFGSKPYSKANAYLESVGKSPINWCESEA</sequence>